<protein>
    <recommendedName>
        <fullName evidence="1">N-succinylarginine dihydrolase</fullName>
        <ecNumber evidence="1">3.5.3.23</ecNumber>
    </recommendedName>
</protein>
<proteinExistence type="inferred from homology"/>
<evidence type="ECO:0000255" key="1">
    <source>
        <dbReference type="HAMAP-Rule" id="MF_01172"/>
    </source>
</evidence>
<reference key="1">
    <citation type="journal article" date="2005" name="Proc. Natl. Acad. Sci. U.S.A.">
        <title>Complete genome sequence of Vibrio fischeri: a symbiotic bacterium with pathogenic congeners.</title>
        <authorList>
            <person name="Ruby E.G."/>
            <person name="Urbanowski M."/>
            <person name="Campbell J."/>
            <person name="Dunn A."/>
            <person name="Faini M."/>
            <person name="Gunsalus R."/>
            <person name="Lostroh P."/>
            <person name="Lupp C."/>
            <person name="McCann J."/>
            <person name="Millikan D."/>
            <person name="Schaefer A."/>
            <person name="Stabb E."/>
            <person name="Stevens A."/>
            <person name="Visick K."/>
            <person name="Whistler C."/>
            <person name="Greenberg E.P."/>
        </authorList>
    </citation>
    <scope>NUCLEOTIDE SEQUENCE [LARGE SCALE GENOMIC DNA]</scope>
    <source>
        <strain>ATCC 700601 / ES114</strain>
    </source>
</reference>
<organism>
    <name type="scientific">Aliivibrio fischeri (strain ATCC 700601 / ES114)</name>
    <name type="common">Vibrio fischeri</name>
    <dbReference type="NCBI Taxonomy" id="312309"/>
    <lineage>
        <taxon>Bacteria</taxon>
        <taxon>Pseudomonadati</taxon>
        <taxon>Pseudomonadota</taxon>
        <taxon>Gammaproteobacteria</taxon>
        <taxon>Vibrionales</taxon>
        <taxon>Vibrionaceae</taxon>
        <taxon>Aliivibrio</taxon>
    </lineage>
</organism>
<dbReference type="EC" id="3.5.3.23" evidence="1"/>
<dbReference type="EMBL" id="CP000021">
    <property type="protein sequence ID" value="AAW87917.1"/>
    <property type="molecule type" value="Genomic_DNA"/>
</dbReference>
<dbReference type="RefSeq" id="WP_011263665.1">
    <property type="nucleotide sequence ID" value="NC_006841.2"/>
</dbReference>
<dbReference type="RefSeq" id="YP_206805.1">
    <property type="nucleotide sequence ID" value="NC_006841.2"/>
</dbReference>
<dbReference type="SMR" id="Q5DZ79"/>
<dbReference type="STRING" id="312309.VF_A0847"/>
<dbReference type="EnsemblBacteria" id="AAW87917">
    <property type="protein sequence ID" value="AAW87917"/>
    <property type="gene ID" value="VF_A0847"/>
</dbReference>
<dbReference type="GeneID" id="54166165"/>
<dbReference type="KEGG" id="vfi:VF_A0847"/>
<dbReference type="PATRIC" id="fig|312309.11.peg.3448"/>
<dbReference type="eggNOG" id="COG3724">
    <property type="taxonomic scope" value="Bacteria"/>
</dbReference>
<dbReference type="HOGENOM" id="CLU_053835_0_0_6"/>
<dbReference type="OrthoDB" id="248552at2"/>
<dbReference type="UniPathway" id="UPA00185">
    <property type="reaction ID" value="UER00280"/>
</dbReference>
<dbReference type="Proteomes" id="UP000000537">
    <property type="component" value="Chromosome II"/>
</dbReference>
<dbReference type="GO" id="GO:0009015">
    <property type="term" value="F:N-succinylarginine dihydrolase activity"/>
    <property type="evidence" value="ECO:0007669"/>
    <property type="project" value="UniProtKB-UniRule"/>
</dbReference>
<dbReference type="GO" id="GO:0019544">
    <property type="term" value="P:arginine catabolic process to glutamate"/>
    <property type="evidence" value="ECO:0007669"/>
    <property type="project" value="UniProtKB-UniRule"/>
</dbReference>
<dbReference type="GO" id="GO:0019545">
    <property type="term" value="P:arginine catabolic process to succinate"/>
    <property type="evidence" value="ECO:0007669"/>
    <property type="project" value="UniProtKB-UniRule"/>
</dbReference>
<dbReference type="Gene3D" id="3.75.10.20">
    <property type="entry name" value="Succinylarginine dihydrolase"/>
    <property type="match status" value="1"/>
</dbReference>
<dbReference type="HAMAP" id="MF_01172">
    <property type="entry name" value="AstB"/>
    <property type="match status" value="1"/>
</dbReference>
<dbReference type="InterPro" id="IPR037031">
    <property type="entry name" value="AstB_sf"/>
</dbReference>
<dbReference type="InterPro" id="IPR007079">
    <property type="entry name" value="SuccinylArg_d-Hdrlase_AstB"/>
</dbReference>
<dbReference type="NCBIfam" id="TIGR03241">
    <property type="entry name" value="arg_catab_astB"/>
    <property type="match status" value="1"/>
</dbReference>
<dbReference type="NCBIfam" id="NF009789">
    <property type="entry name" value="PRK13281.1"/>
    <property type="match status" value="1"/>
</dbReference>
<dbReference type="PANTHER" id="PTHR30420">
    <property type="entry name" value="N-SUCCINYLARGININE DIHYDROLASE"/>
    <property type="match status" value="1"/>
</dbReference>
<dbReference type="PANTHER" id="PTHR30420:SF2">
    <property type="entry name" value="N-SUCCINYLARGININE DIHYDROLASE"/>
    <property type="match status" value="1"/>
</dbReference>
<dbReference type="Pfam" id="PF04996">
    <property type="entry name" value="AstB"/>
    <property type="match status" value="1"/>
</dbReference>
<dbReference type="SUPFAM" id="SSF55909">
    <property type="entry name" value="Pentein"/>
    <property type="match status" value="1"/>
</dbReference>
<comment type="function">
    <text evidence="1">Catalyzes the hydrolysis of N(2)-succinylarginine into N(2)-succinylornithine, ammonia and CO(2).</text>
</comment>
<comment type="catalytic activity">
    <reaction evidence="1">
        <text>N(2)-succinyl-L-arginine + 2 H2O + 2 H(+) = N(2)-succinyl-L-ornithine + 2 NH4(+) + CO2</text>
        <dbReference type="Rhea" id="RHEA:19533"/>
        <dbReference type="ChEBI" id="CHEBI:15377"/>
        <dbReference type="ChEBI" id="CHEBI:15378"/>
        <dbReference type="ChEBI" id="CHEBI:16526"/>
        <dbReference type="ChEBI" id="CHEBI:28938"/>
        <dbReference type="ChEBI" id="CHEBI:58241"/>
        <dbReference type="ChEBI" id="CHEBI:58514"/>
        <dbReference type="EC" id="3.5.3.23"/>
    </reaction>
</comment>
<comment type="pathway">
    <text evidence="1">Amino-acid degradation; L-arginine degradation via AST pathway; L-glutamate and succinate from L-arginine: step 2/5.</text>
</comment>
<comment type="subunit">
    <text evidence="1">Homodimer.</text>
</comment>
<comment type="similarity">
    <text evidence="1">Belongs to the succinylarginine dihydrolase family.</text>
</comment>
<name>ASTB_ALIF1</name>
<keyword id="KW-0056">Arginine metabolism</keyword>
<keyword id="KW-0378">Hydrolase</keyword>
<keyword id="KW-1185">Reference proteome</keyword>
<accession>Q5DZ79</accession>
<sequence length="444" mass="49400">MKTVESNFDGLVGPTHNYSGLSVGNIASKSNQSGVSNPKQAVKQGLEKMKALHDMGFVQGVLAPQERPDIHTLRRLGFSGSDSEVLKKSYQYSPQLLAACSSASSMWTANAGTVSPSADTADGKVHFTPANLINKFHRSIEDQVTGNILKATFSDEEHFVHHQALPHSDYFGDEGAANHTRFCREYGEQGVEFFVFGKSAFNESYLAPKKYPARQTLEASEAIARTHGLREQFTVFAQQNPDVIDQGVFHNDVIAVGNKNTLFCHQQAFLNQEKVKSDLSDSYGSGFNVIEVPTDKVSVQDAVETYLFNSQLITKADGTTLIILPEHCRQNSRVWAYLNELVEQKCGIDELHTFDLKQSMQNGGGPACLRLRVVLNEAEQKAVNQHTLMSEELFTTLNLWADKHYRDRIEDKDLADPQLLVESRAALDELTQIMHLGSIYPFQK</sequence>
<gene>
    <name evidence="1" type="primary">astB</name>
    <name type="ordered locus">VF_A0847</name>
</gene>
<feature type="chain" id="PRO_0000262381" description="N-succinylarginine dihydrolase">
    <location>
        <begin position="1"/>
        <end position="444"/>
    </location>
</feature>
<feature type="active site" evidence="1">
    <location>
        <position position="174"/>
    </location>
</feature>
<feature type="active site" evidence="1">
    <location>
        <position position="250"/>
    </location>
</feature>
<feature type="active site" description="Nucleophile" evidence="1">
    <location>
        <position position="368"/>
    </location>
</feature>
<feature type="binding site" evidence="1">
    <location>
        <begin position="19"/>
        <end position="28"/>
    </location>
    <ligand>
        <name>substrate</name>
    </ligand>
</feature>
<feature type="binding site" evidence="1">
    <location>
        <position position="110"/>
    </location>
    <ligand>
        <name>substrate</name>
    </ligand>
</feature>
<feature type="binding site" evidence="1">
    <location>
        <begin position="137"/>
        <end position="138"/>
    </location>
    <ligand>
        <name>substrate</name>
    </ligand>
</feature>
<feature type="binding site" evidence="1">
    <location>
        <position position="214"/>
    </location>
    <ligand>
        <name>substrate</name>
    </ligand>
</feature>
<feature type="binding site" evidence="1">
    <location>
        <position position="252"/>
    </location>
    <ligand>
        <name>substrate</name>
    </ligand>
</feature>
<feature type="binding site" evidence="1">
    <location>
        <position position="362"/>
    </location>
    <ligand>
        <name>substrate</name>
    </ligand>
</feature>